<keyword id="KW-0687">Ribonucleoprotein</keyword>
<keyword id="KW-0689">Ribosomal protein</keyword>
<keyword id="KW-0694">RNA-binding</keyword>
<keyword id="KW-0699">rRNA-binding</keyword>
<sequence>MELVIKDVPSLLSVSEIIFGRDFNEALIHQVVVAYSASTRQGTRAQKSRADVSGSGRKPWRQKGTGRARAGSFRSPIWRSGGVTFASKPQSHSQKINKKMYRGALKSIFSELIRQKRLIIFEKFSLDLPKTNLLVKKLKEIKLNNVLILTKEIENNLFLASRNLYSVDVKDVCSMDPVSLIAFEHIIITVAALKKVEEMLS</sequence>
<proteinExistence type="inferred from homology"/>
<accession>Q8K951</accession>
<evidence type="ECO:0000255" key="1">
    <source>
        <dbReference type="HAMAP-Rule" id="MF_01328"/>
    </source>
</evidence>
<evidence type="ECO:0000256" key="2">
    <source>
        <dbReference type="SAM" id="MobiDB-lite"/>
    </source>
</evidence>
<evidence type="ECO:0000305" key="3"/>
<gene>
    <name evidence="1" type="primary">rplD</name>
    <name type="ordered locus">BUsg_504</name>
</gene>
<organism>
    <name type="scientific">Buchnera aphidicola subsp. Schizaphis graminum (strain Sg)</name>
    <dbReference type="NCBI Taxonomy" id="198804"/>
    <lineage>
        <taxon>Bacteria</taxon>
        <taxon>Pseudomonadati</taxon>
        <taxon>Pseudomonadota</taxon>
        <taxon>Gammaproteobacteria</taxon>
        <taxon>Enterobacterales</taxon>
        <taxon>Erwiniaceae</taxon>
        <taxon>Buchnera</taxon>
    </lineage>
</organism>
<feature type="chain" id="PRO_0000129196" description="Large ribosomal subunit protein uL4">
    <location>
        <begin position="1"/>
        <end position="201"/>
    </location>
</feature>
<feature type="region of interest" description="Disordered" evidence="2">
    <location>
        <begin position="44"/>
        <end position="68"/>
    </location>
</feature>
<dbReference type="EMBL" id="AE013218">
    <property type="protein sequence ID" value="AAM68047.1"/>
    <property type="molecule type" value="Genomic_DNA"/>
</dbReference>
<dbReference type="RefSeq" id="WP_011054013.1">
    <property type="nucleotide sequence ID" value="NC_004061.1"/>
</dbReference>
<dbReference type="SMR" id="Q8K951"/>
<dbReference type="STRING" id="198804.BUsg_504"/>
<dbReference type="GeneID" id="93003979"/>
<dbReference type="KEGG" id="bas:BUsg_504"/>
<dbReference type="eggNOG" id="COG0088">
    <property type="taxonomic scope" value="Bacteria"/>
</dbReference>
<dbReference type="HOGENOM" id="CLU_041575_5_2_6"/>
<dbReference type="Proteomes" id="UP000000416">
    <property type="component" value="Chromosome"/>
</dbReference>
<dbReference type="GO" id="GO:1990904">
    <property type="term" value="C:ribonucleoprotein complex"/>
    <property type="evidence" value="ECO:0007669"/>
    <property type="project" value="UniProtKB-KW"/>
</dbReference>
<dbReference type="GO" id="GO:0005840">
    <property type="term" value="C:ribosome"/>
    <property type="evidence" value="ECO:0007669"/>
    <property type="project" value="UniProtKB-KW"/>
</dbReference>
<dbReference type="GO" id="GO:0019843">
    <property type="term" value="F:rRNA binding"/>
    <property type="evidence" value="ECO:0007669"/>
    <property type="project" value="UniProtKB-UniRule"/>
</dbReference>
<dbReference type="GO" id="GO:0003735">
    <property type="term" value="F:structural constituent of ribosome"/>
    <property type="evidence" value="ECO:0007669"/>
    <property type="project" value="InterPro"/>
</dbReference>
<dbReference type="GO" id="GO:0006412">
    <property type="term" value="P:translation"/>
    <property type="evidence" value="ECO:0007669"/>
    <property type="project" value="UniProtKB-UniRule"/>
</dbReference>
<dbReference type="FunFam" id="3.40.1370.10:FF:000001">
    <property type="entry name" value="50S ribosomal protein L4"/>
    <property type="match status" value="1"/>
</dbReference>
<dbReference type="Gene3D" id="3.40.1370.10">
    <property type="match status" value="1"/>
</dbReference>
<dbReference type="HAMAP" id="MF_01328_B">
    <property type="entry name" value="Ribosomal_uL4_B"/>
    <property type="match status" value="1"/>
</dbReference>
<dbReference type="InterPro" id="IPR002136">
    <property type="entry name" value="Ribosomal_uL4"/>
</dbReference>
<dbReference type="InterPro" id="IPR013005">
    <property type="entry name" value="Ribosomal_uL4-like"/>
</dbReference>
<dbReference type="InterPro" id="IPR023574">
    <property type="entry name" value="Ribosomal_uL4_dom_sf"/>
</dbReference>
<dbReference type="NCBIfam" id="TIGR03953">
    <property type="entry name" value="rplD_bact"/>
    <property type="match status" value="1"/>
</dbReference>
<dbReference type="PANTHER" id="PTHR10746">
    <property type="entry name" value="50S RIBOSOMAL PROTEIN L4"/>
    <property type="match status" value="1"/>
</dbReference>
<dbReference type="PANTHER" id="PTHR10746:SF6">
    <property type="entry name" value="LARGE RIBOSOMAL SUBUNIT PROTEIN UL4M"/>
    <property type="match status" value="1"/>
</dbReference>
<dbReference type="Pfam" id="PF00573">
    <property type="entry name" value="Ribosomal_L4"/>
    <property type="match status" value="1"/>
</dbReference>
<dbReference type="SUPFAM" id="SSF52166">
    <property type="entry name" value="Ribosomal protein L4"/>
    <property type="match status" value="1"/>
</dbReference>
<comment type="function">
    <text evidence="1">One of the primary rRNA binding proteins, this protein initially binds near the 5'-end of the 23S rRNA. It is important during the early stages of 50S assembly. It makes multiple contacts with different domains of the 23S rRNA in the assembled 50S subunit and ribosome.</text>
</comment>
<comment type="function">
    <text evidence="1">Forms part of the polypeptide exit tunnel.</text>
</comment>
<comment type="subunit">
    <text evidence="1">Part of the 50S ribosomal subunit.</text>
</comment>
<comment type="similarity">
    <text evidence="1">Belongs to the universal ribosomal protein uL4 family.</text>
</comment>
<protein>
    <recommendedName>
        <fullName evidence="1">Large ribosomal subunit protein uL4</fullName>
    </recommendedName>
    <alternativeName>
        <fullName evidence="3">50S ribosomal protein L4</fullName>
    </alternativeName>
</protein>
<reference key="1">
    <citation type="journal article" date="2002" name="Science">
        <title>50 million years of genomic stasis in endosymbiotic bacteria.</title>
        <authorList>
            <person name="Tamas I."/>
            <person name="Klasson L."/>
            <person name="Canbaeck B."/>
            <person name="Naeslund A.K."/>
            <person name="Eriksson A.-S."/>
            <person name="Wernegreen J.J."/>
            <person name="Sandstroem J.P."/>
            <person name="Moran N.A."/>
            <person name="Andersson S.G.E."/>
        </authorList>
    </citation>
    <scope>NUCLEOTIDE SEQUENCE [LARGE SCALE GENOMIC DNA]</scope>
    <source>
        <strain>Sg</strain>
    </source>
</reference>
<name>RL4_BUCAP</name>